<name>RL2_UREP2</name>
<accession>B1AIM3</accession>
<organism>
    <name type="scientific">Ureaplasma parvum serovar 3 (strain ATCC 27815 / 27 / NCTC 11736)</name>
    <dbReference type="NCBI Taxonomy" id="505682"/>
    <lineage>
        <taxon>Bacteria</taxon>
        <taxon>Bacillati</taxon>
        <taxon>Mycoplasmatota</taxon>
        <taxon>Mycoplasmoidales</taxon>
        <taxon>Mycoplasmoidaceae</taxon>
        <taxon>Ureaplasma</taxon>
    </lineage>
</organism>
<reference key="1">
    <citation type="submission" date="2008-02" db="EMBL/GenBank/DDBJ databases">
        <title>Genome sequence of Ureaplasma parvum serovar 3.</title>
        <authorList>
            <person name="Methe B.A."/>
            <person name="Glass J."/>
            <person name="Waites K."/>
            <person name="Shrivastava S."/>
        </authorList>
    </citation>
    <scope>NUCLEOTIDE SEQUENCE [LARGE SCALE GENOMIC DNA]</scope>
    <source>
        <strain>ATCC 27815 / 27 / NCTC 11736</strain>
    </source>
</reference>
<evidence type="ECO:0000255" key="1">
    <source>
        <dbReference type="HAMAP-Rule" id="MF_01320"/>
    </source>
</evidence>
<evidence type="ECO:0000256" key="2">
    <source>
        <dbReference type="SAM" id="MobiDB-lite"/>
    </source>
</evidence>
<evidence type="ECO:0000305" key="3"/>
<proteinExistence type="inferred from homology"/>
<comment type="function">
    <text evidence="1">One of the primary rRNA binding proteins. Required for association of the 30S and 50S subunits to form the 70S ribosome, for tRNA binding and peptide bond formation. It has been suggested to have peptidyltransferase activity; this is somewhat controversial. Makes several contacts with the 16S rRNA in the 70S ribosome.</text>
</comment>
<comment type="subunit">
    <text evidence="1">Part of the 50S ribosomal subunit. Forms a bridge to the 30S subunit in the 70S ribosome.</text>
</comment>
<comment type="similarity">
    <text evidence="1">Belongs to the universal ribosomal protein uL2 family.</text>
</comment>
<dbReference type="EMBL" id="CP000942">
    <property type="protein sequence ID" value="ACA33069.1"/>
    <property type="molecule type" value="Genomic_DNA"/>
</dbReference>
<dbReference type="RefSeq" id="WP_004025838.1">
    <property type="nucleotide sequence ID" value="NC_010503.1"/>
</dbReference>
<dbReference type="SMR" id="B1AIM3"/>
<dbReference type="GeneID" id="93848709"/>
<dbReference type="KEGG" id="upa:UPA3_0242"/>
<dbReference type="HOGENOM" id="CLU_036235_2_1_14"/>
<dbReference type="Proteomes" id="UP000002162">
    <property type="component" value="Chromosome"/>
</dbReference>
<dbReference type="GO" id="GO:0015934">
    <property type="term" value="C:large ribosomal subunit"/>
    <property type="evidence" value="ECO:0007669"/>
    <property type="project" value="InterPro"/>
</dbReference>
<dbReference type="GO" id="GO:0019843">
    <property type="term" value="F:rRNA binding"/>
    <property type="evidence" value="ECO:0007669"/>
    <property type="project" value="UniProtKB-UniRule"/>
</dbReference>
<dbReference type="GO" id="GO:0003735">
    <property type="term" value="F:structural constituent of ribosome"/>
    <property type="evidence" value="ECO:0007669"/>
    <property type="project" value="InterPro"/>
</dbReference>
<dbReference type="GO" id="GO:0016740">
    <property type="term" value="F:transferase activity"/>
    <property type="evidence" value="ECO:0007669"/>
    <property type="project" value="InterPro"/>
</dbReference>
<dbReference type="GO" id="GO:0002181">
    <property type="term" value="P:cytoplasmic translation"/>
    <property type="evidence" value="ECO:0007669"/>
    <property type="project" value="TreeGrafter"/>
</dbReference>
<dbReference type="FunFam" id="2.30.30.30:FF:000001">
    <property type="entry name" value="50S ribosomal protein L2"/>
    <property type="match status" value="1"/>
</dbReference>
<dbReference type="FunFam" id="2.40.50.140:FF:000003">
    <property type="entry name" value="50S ribosomal protein L2"/>
    <property type="match status" value="1"/>
</dbReference>
<dbReference type="FunFam" id="4.10.950.10:FF:000001">
    <property type="entry name" value="50S ribosomal protein L2"/>
    <property type="match status" value="1"/>
</dbReference>
<dbReference type="Gene3D" id="2.30.30.30">
    <property type="match status" value="1"/>
</dbReference>
<dbReference type="Gene3D" id="2.40.50.140">
    <property type="entry name" value="Nucleic acid-binding proteins"/>
    <property type="match status" value="1"/>
</dbReference>
<dbReference type="Gene3D" id="4.10.950.10">
    <property type="entry name" value="Ribosomal protein L2, domain 3"/>
    <property type="match status" value="1"/>
</dbReference>
<dbReference type="HAMAP" id="MF_01320_B">
    <property type="entry name" value="Ribosomal_uL2_B"/>
    <property type="match status" value="1"/>
</dbReference>
<dbReference type="InterPro" id="IPR012340">
    <property type="entry name" value="NA-bd_OB-fold"/>
</dbReference>
<dbReference type="InterPro" id="IPR014722">
    <property type="entry name" value="Rib_uL2_dom2"/>
</dbReference>
<dbReference type="InterPro" id="IPR002171">
    <property type="entry name" value="Ribosomal_uL2"/>
</dbReference>
<dbReference type="InterPro" id="IPR005880">
    <property type="entry name" value="Ribosomal_uL2_bac/org-type"/>
</dbReference>
<dbReference type="InterPro" id="IPR022669">
    <property type="entry name" value="Ribosomal_uL2_C"/>
</dbReference>
<dbReference type="InterPro" id="IPR022671">
    <property type="entry name" value="Ribosomal_uL2_CS"/>
</dbReference>
<dbReference type="InterPro" id="IPR014726">
    <property type="entry name" value="Ribosomal_uL2_dom3"/>
</dbReference>
<dbReference type="InterPro" id="IPR022666">
    <property type="entry name" value="Ribosomal_uL2_RNA-bd_dom"/>
</dbReference>
<dbReference type="InterPro" id="IPR008991">
    <property type="entry name" value="Translation_prot_SH3-like_sf"/>
</dbReference>
<dbReference type="NCBIfam" id="TIGR01171">
    <property type="entry name" value="rplB_bact"/>
    <property type="match status" value="1"/>
</dbReference>
<dbReference type="PANTHER" id="PTHR13691:SF5">
    <property type="entry name" value="LARGE RIBOSOMAL SUBUNIT PROTEIN UL2M"/>
    <property type="match status" value="1"/>
</dbReference>
<dbReference type="PANTHER" id="PTHR13691">
    <property type="entry name" value="RIBOSOMAL PROTEIN L2"/>
    <property type="match status" value="1"/>
</dbReference>
<dbReference type="Pfam" id="PF00181">
    <property type="entry name" value="Ribosomal_L2"/>
    <property type="match status" value="1"/>
</dbReference>
<dbReference type="Pfam" id="PF03947">
    <property type="entry name" value="Ribosomal_L2_C"/>
    <property type="match status" value="1"/>
</dbReference>
<dbReference type="PIRSF" id="PIRSF002158">
    <property type="entry name" value="Ribosomal_L2"/>
    <property type="match status" value="1"/>
</dbReference>
<dbReference type="SMART" id="SM01383">
    <property type="entry name" value="Ribosomal_L2"/>
    <property type="match status" value="1"/>
</dbReference>
<dbReference type="SMART" id="SM01382">
    <property type="entry name" value="Ribosomal_L2_C"/>
    <property type="match status" value="1"/>
</dbReference>
<dbReference type="SUPFAM" id="SSF50249">
    <property type="entry name" value="Nucleic acid-binding proteins"/>
    <property type="match status" value="1"/>
</dbReference>
<dbReference type="SUPFAM" id="SSF50104">
    <property type="entry name" value="Translation proteins SH3-like domain"/>
    <property type="match status" value="1"/>
</dbReference>
<dbReference type="PROSITE" id="PS00467">
    <property type="entry name" value="RIBOSOMAL_L2"/>
    <property type="match status" value="1"/>
</dbReference>
<protein>
    <recommendedName>
        <fullName evidence="1">Large ribosomal subunit protein uL2</fullName>
    </recommendedName>
    <alternativeName>
        <fullName evidence="3">50S ribosomal protein L2</fullName>
    </alternativeName>
</protein>
<keyword id="KW-0687">Ribonucleoprotein</keyword>
<keyword id="KW-0689">Ribosomal protein</keyword>
<keyword id="KW-0694">RNA-binding</keyword>
<keyword id="KW-0699">rRNA-binding</keyword>
<feature type="chain" id="PRO_1000086359" description="Large ribosomal subunit protein uL2">
    <location>
        <begin position="1"/>
        <end position="279"/>
    </location>
</feature>
<feature type="region of interest" description="Disordered" evidence="2">
    <location>
        <begin position="223"/>
        <end position="279"/>
    </location>
</feature>
<feature type="compositionally biased region" description="Basic residues" evidence="2">
    <location>
        <begin position="254"/>
        <end position="267"/>
    </location>
</feature>
<sequence>MAVKRIKNHSSGKRQTVVVDYKSILTTSKPEKSLLVTLPKKAGRNNQGKITIRHHGGGHKRKYRIIDFKRNKDNIYGTIKSIEYDPNRTSFISLVVYADGEKRYIIAPKGIKVGDKIISGNENIDILLGNSLPLEFIPEGTLVHNIELSPNAGGQITRSAGASAQILGFDETKKYILVKLNSGEVRKFRKECRATIGTVSNDEHILENLGKAGKSRHLGVRPTVRGSAMNPNDHPHGGGEGRSPVGMDAPRTPWGKRHMGVKTRNNKKSSTSMIVRRRK</sequence>
<gene>
    <name evidence="1" type="primary">rplB</name>
    <name type="ordered locus">UPA3_0242</name>
</gene>